<comment type="function">
    <text evidence="5">Prolyl 3-hydroxylase that catalyzes 3-hydroxylation of 'Pro-62' of small ribosomal subunit uS12 (RpS23), thereby regulating protein translation termination efficiency.</text>
</comment>
<comment type="catalytic activity">
    <reaction evidence="2">
        <text>[ribosomal protein uS12]-L-proline + 2-oxoglutarate + O2 = [ribosomal protein uS12]-(3S)-3-hydroxy-L-proline + succinate + CO2</text>
        <dbReference type="Rhea" id="RHEA:54156"/>
        <dbReference type="Rhea" id="RHEA-COMP:13816"/>
        <dbReference type="Rhea" id="RHEA-COMP:13818"/>
        <dbReference type="ChEBI" id="CHEBI:15379"/>
        <dbReference type="ChEBI" id="CHEBI:16526"/>
        <dbReference type="ChEBI" id="CHEBI:16810"/>
        <dbReference type="ChEBI" id="CHEBI:30031"/>
        <dbReference type="ChEBI" id="CHEBI:50342"/>
        <dbReference type="ChEBI" id="CHEBI:85428"/>
    </reaction>
</comment>
<comment type="cofactor">
    <cofactor evidence="3">
        <name>Fe(2+)</name>
        <dbReference type="ChEBI" id="CHEBI:29033"/>
    </cofactor>
    <text evidence="3">Binds 1 Fe(2+) ion per subunit.</text>
</comment>
<comment type="cofactor">
    <cofactor evidence="2">
        <name>L-ascorbate</name>
        <dbReference type="ChEBI" id="CHEBI:38290"/>
    </cofactor>
</comment>
<comment type="subunit">
    <text evidence="2">Monomer.</text>
</comment>
<comment type="subcellular location">
    <subcellularLocation>
        <location evidence="5">Nucleus</location>
    </subcellularLocation>
    <subcellularLocation>
        <location evidence="5">Cytoplasm</location>
    </subcellularLocation>
    <text>Localizes predominantly to the nucleus. Present at lower levels are also detected in the cytoplasm.</text>
</comment>
<comment type="tissue specificity">
    <text evidence="5">In third-instar larval tissues,highly expressed in the fat body, with significant expression in other organs including the brain, salivary glands, imaginal disks and gut.</text>
</comment>
<comment type="developmental stage">
    <text evidence="5">Expressed at all developmental stages, with the highest levels at the first larval instar.</text>
</comment>
<comment type="similarity">
    <text evidence="6">Belongs to the TPA1 family.</text>
</comment>
<organism>
    <name type="scientific">Drosophila melanogaster</name>
    <name type="common">Fruit fly</name>
    <dbReference type="NCBI Taxonomy" id="7227"/>
    <lineage>
        <taxon>Eukaryota</taxon>
        <taxon>Metazoa</taxon>
        <taxon>Ecdysozoa</taxon>
        <taxon>Arthropoda</taxon>
        <taxon>Hexapoda</taxon>
        <taxon>Insecta</taxon>
        <taxon>Pterygota</taxon>
        <taxon>Neoptera</taxon>
        <taxon>Endopterygota</taxon>
        <taxon>Diptera</taxon>
        <taxon>Brachycera</taxon>
        <taxon>Muscomorpha</taxon>
        <taxon>Ephydroidea</taxon>
        <taxon>Drosophilidae</taxon>
        <taxon>Drosophila</taxon>
        <taxon>Sophophora</taxon>
    </lineage>
</organism>
<accession>Q9I7H9</accession>
<gene>
    <name type="primary">sud1</name>
    <name type="ORF">CG18761</name>
    <name type="ORF">CG31120</name>
    <name type="ORF">CG44254</name>
</gene>
<name>OGFD1_DROME</name>
<dbReference type="EC" id="1.14.11.-"/>
<dbReference type="EMBL" id="AE014297">
    <property type="protein sequence ID" value="AAG22170.1"/>
    <property type="molecule type" value="Genomic_DNA"/>
</dbReference>
<dbReference type="EMBL" id="AY058522">
    <property type="protein sequence ID" value="AAL13751.1"/>
    <property type="molecule type" value="mRNA"/>
</dbReference>
<dbReference type="RefSeq" id="NP_733061.1">
    <property type="nucleotide sequence ID" value="NM_170182.3"/>
</dbReference>
<dbReference type="SMR" id="Q9I7H9"/>
<dbReference type="BioGRID" id="2593515">
    <property type="interactions" value="2"/>
</dbReference>
<dbReference type="FunCoup" id="Q9I7H9">
    <property type="interactions" value="1708"/>
</dbReference>
<dbReference type="IntAct" id="Q9I7H9">
    <property type="interactions" value="29"/>
</dbReference>
<dbReference type="STRING" id="7227.FBpp0308258"/>
<dbReference type="DNASU" id="19834718"/>
<dbReference type="EnsemblMetazoa" id="FBtr0339113">
    <property type="protein sequence ID" value="FBpp0308258"/>
    <property type="gene ID" value="FBgn0265189"/>
</dbReference>
<dbReference type="GeneID" id="19834718"/>
<dbReference type="KEGG" id="dme:Dmel_CG44254"/>
<dbReference type="UCSC" id="CG31120-RA">
    <property type="organism name" value="d. melanogaster"/>
</dbReference>
<dbReference type="AGR" id="FB:FBgn0265189"/>
<dbReference type="CTD" id="19834718"/>
<dbReference type="FlyBase" id="FBgn0265189">
    <property type="gene designation" value="sud1"/>
</dbReference>
<dbReference type="VEuPathDB" id="VectorBase:FBgn0265189"/>
<dbReference type="GeneTree" id="ENSGT00390000002349"/>
<dbReference type="HOGENOM" id="CLU_027679_0_0_1"/>
<dbReference type="InParanoid" id="Q9I7H9"/>
<dbReference type="OMA" id="SCYARTD"/>
<dbReference type="OrthoDB" id="430522at2759"/>
<dbReference type="Reactome" id="R-DME-9629569">
    <property type="pathway name" value="Protein hydroxylation"/>
</dbReference>
<dbReference type="BioGRID-ORCS" id="19834718">
    <property type="hits" value="0 hits in 1 CRISPR screen"/>
</dbReference>
<dbReference type="GenomeRNAi" id="19834718"/>
<dbReference type="PRO" id="PR:Q9I7H9"/>
<dbReference type="Proteomes" id="UP000000803">
    <property type="component" value="Chromosome 3R"/>
</dbReference>
<dbReference type="Bgee" id="FBgn0265189">
    <property type="expression patterns" value="Expressed in oocyte and 35 other cell types or tissues"/>
</dbReference>
<dbReference type="GO" id="GO:0005737">
    <property type="term" value="C:cytoplasm"/>
    <property type="evidence" value="ECO:0000314"/>
    <property type="project" value="UniProtKB"/>
</dbReference>
<dbReference type="GO" id="GO:0005634">
    <property type="term" value="C:nucleus"/>
    <property type="evidence" value="ECO:0000314"/>
    <property type="project" value="UniProtKB"/>
</dbReference>
<dbReference type="GO" id="GO:0005506">
    <property type="term" value="F:iron ion binding"/>
    <property type="evidence" value="ECO:0007669"/>
    <property type="project" value="InterPro"/>
</dbReference>
<dbReference type="GO" id="GO:0031418">
    <property type="term" value="F:L-ascorbic acid binding"/>
    <property type="evidence" value="ECO:0000255"/>
    <property type="project" value="FlyBase"/>
</dbReference>
<dbReference type="GO" id="GO:0031543">
    <property type="term" value="F:peptidyl-proline dioxygenase activity"/>
    <property type="evidence" value="ECO:0000314"/>
    <property type="project" value="UniProtKB"/>
</dbReference>
<dbReference type="GO" id="GO:0018126">
    <property type="term" value="P:protein hydroxylation"/>
    <property type="evidence" value="ECO:0000314"/>
    <property type="project" value="UniProtKB"/>
</dbReference>
<dbReference type="GO" id="GO:0006417">
    <property type="term" value="P:regulation of translation"/>
    <property type="evidence" value="ECO:0000315"/>
    <property type="project" value="UniProtKB"/>
</dbReference>
<dbReference type="GO" id="GO:0006449">
    <property type="term" value="P:regulation of translational termination"/>
    <property type="evidence" value="ECO:0000318"/>
    <property type="project" value="GO_Central"/>
</dbReference>
<dbReference type="FunFam" id="2.60.120.620:FF:000036">
    <property type="entry name" value="Prolyl 3-hydroxylase sudestada1"/>
    <property type="match status" value="1"/>
</dbReference>
<dbReference type="FunFam" id="2.60.120.620:FF:000035">
    <property type="entry name" value="prolyl 3-hydroxylase sudestada1 isoform X2"/>
    <property type="match status" value="1"/>
</dbReference>
<dbReference type="Gene3D" id="2.60.120.620">
    <property type="entry name" value="q2cbj1_9rhob like domain"/>
    <property type="match status" value="2"/>
</dbReference>
<dbReference type="InterPro" id="IPR005123">
    <property type="entry name" value="Oxoglu/Fe-dep_dioxygenase_dom"/>
</dbReference>
<dbReference type="InterPro" id="IPR019601">
    <property type="entry name" value="Oxoglutarate/Fe-dep_Oase_C"/>
</dbReference>
<dbReference type="InterPro" id="IPR006620">
    <property type="entry name" value="Pro_4_hyd_alph"/>
</dbReference>
<dbReference type="InterPro" id="IPR039558">
    <property type="entry name" value="TPA1/OFD1_N"/>
</dbReference>
<dbReference type="InterPro" id="IPR051842">
    <property type="entry name" value="uS12_prolyl_hydroxylase"/>
</dbReference>
<dbReference type="PANTHER" id="PTHR12117">
    <property type="entry name" value="HISTONE ACETYLTRANSFERASE COMPLEX"/>
    <property type="match status" value="1"/>
</dbReference>
<dbReference type="PANTHER" id="PTHR12117:SF0">
    <property type="entry name" value="PROLYL 3-HYDROXYLASE OGFOD1"/>
    <property type="match status" value="1"/>
</dbReference>
<dbReference type="Pfam" id="PF13661">
    <property type="entry name" value="2OG-FeII_Oxy_4"/>
    <property type="match status" value="1"/>
</dbReference>
<dbReference type="Pfam" id="PF10637">
    <property type="entry name" value="Ofd1_CTDD"/>
    <property type="match status" value="1"/>
</dbReference>
<dbReference type="SMART" id="SM00702">
    <property type="entry name" value="P4Hc"/>
    <property type="match status" value="1"/>
</dbReference>
<dbReference type="PROSITE" id="PS51471">
    <property type="entry name" value="FE2OG_OXY"/>
    <property type="match status" value="1"/>
</dbReference>
<proteinExistence type="evidence at transcript level"/>
<evidence type="ECO:0000250" key="1">
    <source>
        <dbReference type="UniProtKB" id="P40032"/>
    </source>
</evidence>
<evidence type="ECO:0000250" key="2">
    <source>
        <dbReference type="UniProtKB" id="Q8N543"/>
    </source>
</evidence>
<evidence type="ECO:0000255" key="3">
    <source>
        <dbReference type="PROSITE-ProRule" id="PRU00805"/>
    </source>
</evidence>
<evidence type="ECO:0000256" key="4">
    <source>
        <dbReference type="SAM" id="MobiDB-lite"/>
    </source>
</evidence>
<evidence type="ECO:0000269" key="5">
    <source>
    </source>
</evidence>
<evidence type="ECO:0000305" key="6"/>
<sequence>METSSSSPVKPRRKDKDEDGRAEQEDSADQVGEPHRKLLRLGDILETNEVLLNEAYQQPELTKWLQTAWTEEKSQGTKETQTGAQVFSDPFQICLLPGMLEKGQSQALVAEIIQKVQWSRKQMDLYEFYQSADLSNMPACRLLTNFLQVLRKQVRPWLEKVTNLKLDYVSASCSMYTCGDYLLVHDDLLKDRQVAFIYYLSPWEGAEEWTDEQGGCLEIFGSDDQCFPQFPVQRKIAPKDNQFAFFKVGSRSFHQVGEVTTFDYPRLTINGWFHGDTNEAFVADSLRAFPRLNYLQPDGLNRPPLGLFLNNVYLKGATRRSIQKRIEENSEICLYEFFKREKFELARSQLLADSDTLKWRRQGPANAHNYEVLDLTTARGTILELLQLFRSHAMFDLLRDFTDLDLAGTDAESPTCSVELQRWSHGNYTVLGDGLTSEENTLDLVYYLNAAEGAAVITYLAPDAEMPTAKAPTDGRRSDYDDEEEDDSVLLTITPVDNALNIVYRCEGTTKFTKYVSRNTPLEKGPVFVISCSYKE</sequence>
<feature type="chain" id="PRO_0000429171" description="Prolyl 3-hydroxylase sudestada1">
    <location>
        <begin position="1"/>
        <end position="536"/>
    </location>
</feature>
<feature type="domain" description="Fe2OG dioxygenase" evidence="3">
    <location>
        <begin position="165"/>
        <end position="275"/>
    </location>
</feature>
<feature type="region of interest" description="Disordered" evidence="4">
    <location>
        <begin position="1"/>
        <end position="35"/>
    </location>
</feature>
<feature type="region of interest" description="Disordered" evidence="4">
    <location>
        <begin position="467"/>
        <end position="486"/>
    </location>
</feature>
<feature type="compositionally biased region" description="Basic and acidic residues" evidence="4">
    <location>
        <begin position="14"/>
        <end position="24"/>
    </location>
</feature>
<feature type="binding site" evidence="1 3">
    <location>
        <position position="185"/>
    </location>
    <ligand>
        <name>Fe cation</name>
        <dbReference type="ChEBI" id="CHEBI:24875"/>
    </ligand>
</feature>
<feature type="binding site" evidence="3">
    <location>
        <position position="187"/>
    </location>
    <ligand>
        <name>Fe cation</name>
        <dbReference type="ChEBI" id="CHEBI:24875"/>
    </ligand>
</feature>
<feature type="binding site" evidence="1">
    <location>
        <position position="199"/>
    </location>
    <ligand>
        <name>2-oxoglutarate</name>
        <dbReference type="ChEBI" id="CHEBI:16810"/>
    </ligand>
</feature>
<feature type="binding site" evidence="1 3">
    <location>
        <position position="254"/>
    </location>
    <ligand>
        <name>Fe cation</name>
        <dbReference type="ChEBI" id="CHEBI:24875"/>
    </ligand>
</feature>
<feature type="binding site" evidence="3">
    <location>
        <position position="266"/>
    </location>
    <ligand>
        <name>2-oxoglutarate</name>
        <dbReference type="ChEBI" id="CHEBI:16810"/>
    </ligand>
</feature>
<protein>
    <recommendedName>
        <fullName>Prolyl 3-hydroxylase sudestada1</fullName>
        <ecNumber>1.14.11.-</ecNumber>
    </recommendedName>
    <alternativeName>
        <fullName>2-oxoglutarate and iron-dependent oxygenase domain-containing protein 1 homolog</fullName>
    </alternativeName>
    <alternativeName>
        <fullName>uS12 prolyl 3-hydroxylase</fullName>
    </alternativeName>
</protein>
<reference key="1">
    <citation type="journal article" date="2000" name="Science">
        <title>The genome sequence of Drosophila melanogaster.</title>
        <authorList>
            <person name="Adams M.D."/>
            <person name="Celniker S.E."/>
            <person name="Holt R.A."/>
            <person name="Evans C.A."/>
            <person name="Gocayne J.D."/>
            <person name="Amanatides P.G."/>
            <person name="Scherer S.E."/>
            <person name="Li P.W."/>
            <person name="Hoskins R.A."/>
            <person name="Galle R.F."/>
            <person name="George R.A."/>
            <person name="Lewis S.E."/>
            <person name="Richards S."/>
            <person name="Ashburner M."/>
            <person name="Henderson S.N."/>
            <person name="Sutton G.G."/>
            <person name="Wortman J.R."/>
            <person name="Yandell M.D."/>
            <person name="Zhang Q."/>
            <person name="Chen L.X."/>
            <person name="Brandon R.C."/>
            <person name="Rogers Y.-H.C."/>
            <person name="Blazej R.G."/>
            <person name="Champe M."/>
            <person name="Pfeiffer B.D."/>
            <person name="Wan K.H."/>
            <person name="Doyle C."/>
            <person name="Baxter E.G."/>
            <person name="Helt G."/>
            <person name="Nelson C.R."/>
            <person name="Miklos G.L.G."/>
            <person name="Abril J.F."/>
            <person name="Agbayani A."/>
            <person name="An H.-J."/>
            <person name="Andrews-Pfannkoch C."/>
            <person name="Baldwin D."/>
            <person name="Ballew R.M."/>
            <person name="Basu A."/>
            <person name="Baxendale J."/>
            <person name="Bayraktaroglu L."/>
            <person name="Beasley E.M."/>
            <person name="Beeson K.Y."/>
            <person name="Benos P.V."/>
            <person name="Berman B.P."/>
            <person name="Bhandari D."/>
            <person name="Bolshakov S."/>
            <person name="Borkova D."/>
            <person name="Botchan M.R."/>
            <person name="Bouck J."/>
            <person name="Brokstein P."/>
            <person name="Brottier P."/>
            <person name="Burtis K.C."/>
            <person name="Busam D.A."/>
            <person name="Butler H."/>
            <person name="Cadieu E."/>
            <person name="Center A."/>
            <person name="Chandra I."/>
            <person name="Cherry J.M."/>
            <person name="Cawley S."/>
            <person name="Dahlke C."/>
            <person name="Davenport L.B."/>
            <person name="Davies P."/>
            <person name="de Pablos B."/>
            <person name="Delcher A."/>
            <person name="Deng Z."/>
            <person name="Mays A.D."/>
            <person name="Dew I."/>
            <person name="Dietz S.M."/>
            <person name="Dodson K."/>
            <person name="Doup L.E."/>
            <person name="Downes M."/>
            <person name="Dugan-Rocha S."/>
            <person name="Dunkov B.C."/>
            <person name="Dunn P."/>
            <person name="Durbin K.J."/>
            <person name="Evangelista C.C."/>
            <person name="Ferraz C."/>
            <person name="Ferriera S."/>
            <person name="Fleischmann W."/>
            <person name="Fosler C."/>
            <person name="Gabrielian A.E."/>
            <person name="Garg N.S."/>
            <person name="Gelbart W.M."/>
            <person name="Glasser K."/>
            <person name="Glodek A."/>
            <person name="Gong F."/>
            <person name="Gorrell J.H."/>
            <person name="Gu Z."/>
            <person name="Guan P."/>
            <person name="Harris M."/>
            <person name="Harris N.L."/>
            <person name="Harvey D.A."/>
            <person name="Heiman T.J."/>
            <person name="Hernandez J.R."/>
            <person name="Houck J."/>
            <person name="Hostin D."/>
            <person name="Houston K.A."/>
            <person name="Howland T.J."/>
            <person name="Wei M.-H."/>
            <person name="Ibegwam C."/>
            <person name="Jalali M."/>
            <person name="Kalush F."/>
            <person name="Karpen G.H."/>
            <person name="Ke Z."/>
            <person name="Kennison J.A."/>
            <person name="Ketchum K.A."/>
            <person name="Kimmel B.E."/>
            <person name="Kodira C.D."/>
            <person name="Kraft C.L."/>
            <person name="Kravitz S."/>
            <person name="Kulp D."/>
            <person name="Lai Z."/>
            <person name="Lasko P."/>
            <person name="Lei Y."/>
            <person name="Levitsky A.A."/>
            <person name="Li J.H."/>
            <person name="Li Z."/>
            <person name="Liang Y."/>
            <person name="Lin X."/>
            <person name="Liu X."/>
            <person name="Mattei B."/>
            <person name="McIntosh T.C."/>
            <person name="McLeod M.P."/>
            <person name="McPherson D."/>
            <person name="Merkulov G."/>
            <person name="Milshina N.V."/>
            <person name="Mobarry C."/>
            <person name="Morris J."/>
            <person name="Moshrefi A."/>
            <person name="Mount S.M."/>
            <person name="Moy M."/>
            <person name="Murphy B."/>
            <person name="Murphy L."/>
            <person name="Muzny D.M."/>
            <person name="Nelson D.L."/>
            <person name="Nelson D.R."/>
            <person name="Nelson K.A."/>
            <person name="Nixon K."/>
            <person name="Nusskern D.R."/>
            <person name="Pacleb J.M."/>
            <person name="Palazzolo M."/>
            <person name="Pittman G.S."/>
            <person name="Pan S."/>
            <person name="Pollard J."/>
            <person name="Puri V."/>
            <person name="Reese M.G."/>
            <person name="Reinert K."/>
            <person name="Remington K."/>
            <person name="Saunders R.D.C."/>
            <person name="Scheeler F."/>
            <person name="Shen H."/>
            <person name="Shue B.C."/>
            <person name="Siden-Kiamos I."/>
            <person name="Simpson M."/>
            <person name="Skupski M.P."/>
            <person name="Smith T.J."/>
            <person name="Spier E."/>
            <person name="Spradling A.C."/>
            <person name="Stapleton M."/>
            <person name="Strong R."/>
            <person name="Sun E."/>
            <person name="Svirskas R."/>
            <person name="Tector C."/>
            <person name="Turner R."/>
            <person name="Venter E."/>
            <person name="Wang A.H."/>
            <person name="Wang X."/>
            <person name="Wang Z.-Y."/>
            <person name="Wassarman D.A."/>
            <person name="Weinstock G.M."/>
            <person name="Weissenbach J."/>
            <person name="Williams S.M."/>
            <person name="Woodage T."/>
            <person name="Worley K.C."/>
            <person name="Wu D."/>
            <person name="Yang S."/>
            <person name="Yao Q.A."/>
            <person name="Ye J."/>
            <person name="Yeh R.-F."/>
            <person name="Zaveri J.S."/>
            <person name="Zhan M."/>
            <person name="Zhang G."/>
            <person name="Zhao Q."/>
            <person name="Zheng L."/>
            <person name="Zheng X.H."/>
            <person name="Zhong F.N."/>
            <person name="Zhong W."/>
            <person name="Zhou X."/>
            <person name="Zhu S.C."/>
            <person name="Zhu X."/>
            <person name="Smith H.O."/>
            <person name="Gibbs R.A."/>
            <person name="Myers E.W."/>
            <person name="Rubin G.M."/>
            <person name="Venter J.C."/>
        </authorList>
    </citation>
    <scope>NUCLEOTIDE SEQUENCE [LARGE SCALE GENOMIC DNA]</scope>
    <source>
        <strain>Berkeley</strain>
    </source>
</reference>
<reference key="2">
    <citation type="journal article" date="2002" name="Genome Biol.">
        <title>Annotation of the Drosophila melanogaster euchromatic genome: a systematic review.</title>
        <authorList>
            <person name="Misra S."/>
            <person name="Crosby M.A."/>
            <person name="Mungall C.J."/>
            <person name="Matthews B.B."/>
            <person name="Campbell K.S."/>
            <person name="Hradecky P."/>
            <person name="Huang Y."/>
            <person name="Kaminker J.S."/>
            <person name="Millburn G.H."/>
            <person name="Prochnik S.E."/>
            <person name="Smith C.D."/>
            <person name="Tupy J.L."/>
            <person name="Whitfield E.J."/>
            <person name="Bayraktaroglu L."/>
            <person name="Berman B.P."/>
            <person name="Bettencourt B.R."/>
            <person name="Celniker S.E."/>
            <person name="de Grey A.D.N.J."/>
            <person name="Drysdale R.A."/>
            <person name="Harris N.L."/>
            <person name="Richter J."/>
            <person name="Russo S."/>
            <person name="Schroeder A.J."/>
            <person name="Shu S.Q."/>
            <person name="Stapleton M."/>
            <person name="Yamada C."/>
            <person name="Ashburner M."/>
            <person name="Gelbart W.M."/>
            <person name="Rubin G.M."/>
            <person name="Lewis S.E."/>
        </authorList>
    </citation>
    <scope>GENOME REANNOTATION</scope>
    <source>
        <strain>Berkeley</strain>
    </source>
</reference>
<reference key="3">
    <citation type="journal article" date="2002" name="Genome Biol.">
        <title>A Drosophila full-length cDNA resource.</title>
        <authorList>
            <person name="Stapleton M."/>
            <person name="Carlson J.W."/>
            <person name="Brokstein P."/>
            <person name="Yu C."/>
            <person name="Champe M."/>
            <person name="George R.A."/>
            <person name="Guarin H."/>
            <person name="Kronmiller B."/>
            <person name="Pacleb J.M."/>
            <person name="Park S."/>
            <person name="Wan K.H."/>
            <person name="Rubin G.M."/>
            <person name="Celniker S.E."/>
        </authorList>
    </citation>
    <scope>NUCLEOTIDE SEQUENCE [LARGE SCALE MRNA]</scope>
    <source>
        <strain>Berkeley</strain>
        <tissue>Embryo</tissue>
    </source>
</reference>
<reference key="4">
    <citation type="journal article" date="2014" name="Proc. Natl. Acad. Sci. U.S.A.">
        <title>Sudestada1, a Drosophila ribosomal prolyl-hydroxylase required for mRNA translation, cell homeostasis, and organ growth.</title>
        <authorList>
            <person name="Katz M.J."/>
            <person name="Acevedo J.M."/>
            <person name="Loenarz C."/>
            <person name="Galagovsky D."/>
            <person name="Liu-Yi P."/>
            <person name="Perez-Pepe M."/>
            <person name="Thalhammer A."/>
            <person name="Sekirnik R."/>
            <person name="Ge W."/>
            <person name="Melani M."/>
            <person name="Thomas M.G."/>
            <person name="Simonetta S."/>
            <person name="Boccaccio G.L."/>
            <person name="Schofield C.J."/>
            <person name="Cockman M.E."/>
            <person name="Ratcliffe P.J."/>
            <person name="Wappner P."/>
        </authorList>
    </citation>
    <scope>FUNCTION</scope>
    <scope>SUBCELLULAR LOCATION</scope>
    <scope>TISSUE SPECIFICITY</scope>
    <scope>DEVELOPMENTAL STAGE</scope>
</reference>
<keyword id="KW-0963">Cytoplasm</keyword>
<keyword id="KW-0223">Dioxygenase</keyword>
<keyword id="KW-0408">Iron</keyword>
<keyword id="KW-0479">Metal-binding</keyword>
<keyword id="KW-0539">Nucleus</keyword>
<keyword id="KW-0560">Oxidoreductase</keyword>
<keyword id="KW-1185">Reference proteome</keyword>
<keyword id="KW-0847">Vitamin C</keyword>